<comment type="function">
    <text evidence="1">Forms part of the ribosomal stalk which helps the ribosome interact with GTP-bound translation factors. Is thus essential for accurate translation.</text>
</comment>
<comment type="subunit">
    <text evidence="1">Homodimer. Part of the ribosomal stalk of the 50S ribosomal subunit. Forms a multimeric L10(L12)X complex, where L10 forms an elongated spine to which 2 to 4 L12 dimers bind in a sequential fashion. Binds GTP-bound translation factors.</text>
</comment>
<comment type="similarity">
    <text evidence="1">Belongs to the bacterial ribosomal protein bL12 family.</text>
</comment>
<name>RL7_ECO5E</name>
<evidence type="ECO:0000255" key="1">
    <source>
        <dbReference type="HAMAP-Rule" id="MF_00368"/>
    </source>
</evidence>
<evidence type="ECO:0000305" key="2"/>
<sequence length="121" mass="12295">MSITKDQIIEAVAAMSVMDVVELISAMEEKFGVSAAAAVAVAAGPVEAAEEKTEFDVILKAAGANKVAVIKAVRGATGLGLKEAKDLVESAPAALKEGVSKDDAEALKKALEEAGAEVEVK</sequence>
<protein>
    <recommendedName>
        <fullName evidence="1">Large ribosomal subunit protein bL12</fullName>
    </recommendedName>
    <alternativeName>
        <fullName evidence="2">50S ribosomal protein L7/L12</fullName>
    </alternativeName>
</protein>
<gene>
    <name evidence="1" type="primary">rplL</name>
    <name type="ordered locus">ECH74115_5451</name>
</gene>
<dbReference type="EMBL" id="CP001164">
    <property type="protein sequence ID" value="ACI36671.1"/>
    <property type="molecule type" value="Genomic_DNA"/>
</dbReference>
<dbReference type="RefSeq" id="WP_000028878.1">
    <property type="nucleotide sequence ID" value="NC_011353.1"/>
</dbReference>
<dbReference type="SMR" id="B5Z082"/>
<dbReference type="GeneID" id="86944525"/>
<dbReference type="KEGG" id="ecf:ECH74115_5451"/>
<dbReference type="HOGENOM" id="CLU_086499_3_2_6"/>
<dbReference type="GO" id="GO:0022625">
    <property type="term" value="C:cytosolic large ribosomal subunit"/>
    <property type="evidence" value="ECO:0007669"/>
    <property type="project" value="TreeGrafter"/>
</dbReference>
<dbReference type="GO" id="GO:0003729">
    <property type="term" value="F:mRNA binding"/>
    <property type="evidence" value="ECO:0007669"/>
    <property type="project" value="TreeGrafter"/>
</dbReference>
<dbReference type="GO" id="GO:0003735">
    <property type="term" value="F:structural constituent of ribosome"/>
    <property type="evidence" value="ECO:0007669"/>
    <property type="project" value="InterPro"/>
</dbReference>
<dbReference type="GO" id="GO:0006412">
    <property type="term" value="P:translation"/>
    <property type="evidence" value="ECO:0007669"/>
    <property type="project" value="UniProtKB-UniRule"/>
</dbReference>
<dbReference type="CDD" id="cd00387">
    <property type="entry name" value="Ribosomal_L7_L12"/>
    <property type="match status" value="1"/>
</dbReference>
<dbReference type="FunFam" id="1.20.5.710:FF:000001">
    <property type="entry name" value="50S ribosomal protein L7/L12"/>
    <property type="match status" value="1"/>
</dbReference>
<dbReference type="FunFam" id="3.30.1390.10:FF:000001">
    <property type="entry name" value="50S ribosomal protein L7/L12"/>
    <property type="match status" value="1"/>
</dbReference>
<dbReference type="Gene3D" id="3.30.1390.10">
    <property type="match status" value="1"/>
</dbReference>
<dbReference type="Gene3D" id="1.20.5.710">
    <property type="entry name" value="Single helix bin"/>
    <property type="match status" value="1"/>
</dbReference>
<dbReference type="HAMAP" id="MF_00368">
    <property type="entry name" value="Ribosomal_bL12"/>
    <property type="match status" value="1"/>
</dbReference>
<dbReference type="InterPro" id="IPR000206">
    <property type="entry name" value="Ribosomal_bL12"/>
</dbReference>
<dbReference type="InterPro" id="IPR013823">
    <property type="entry name" value="Ribosomal_bL12_C"/>
</dbReference>
<dbReference type="InterPro" id="IPR014719">
    <property type="entry name" value="Ribosomal_bL12_C/ClpS-like"/>
</dbReference>
<dbReference type="InterPro" id="IPR008932">
    <property type="entry name" value="Ribosomal_bL12_oligo"/>
</dbReference>
<dbReference type="InterPro" id="IPR036235">
    <property type="entry name" value="Ribosomal_bL12_oligo_N_sf"/>
</dbReference>
<dbReference type="NCBIfam" id="TIGR00855">
    <property type="entry name" value="L12"/>
    <property type="match status" value="1"/>
</dbReference>
<dbReference type="PANTHER" id="PTHR45987">
    <property type="entry name" value="39S RIBOSOMAL PROTEIN L12"/>
    <property type="match status" value="1"/>
</dbReference>
<dbReference type="PANTHER" id="PTHR45987:SF4">
    <property type="entry name" value="LARGE RIBOSOMAL SUBUNIT PROTEIN BL12M"/>
    <property type="match status" value="1"/>
</dbReference>
<dbReference type="Pfam" id="PF00542">
    <property type="entry name" value="Ribosomal_L12"/>
    <property type="match status" value="1"/>
</dbReference>
<dbReference type="Pfam" id="PF16320">
    <property type="entry name" value="Ribosomal_L12_N"/>
    <property type="match status" value="1"/>
</dbReference>
<dbReference type="SUPFAM" id="SSF54736">
    <property type="entry name" value="ClpS-like"/>
    <property type="match status" value="1"/>
</dbReference>
<dbReference type="SUPFAM" id="SSF48300">
    <property type="entry name" value="Ribosomal protein L7/12, oligomerisation (N-terminal) domain"/>
    <property type="match status" value="1"/>
</dbReference>
<organism>
    <name type="scientific">Escherichia coli O157:H7 (strain EC4115 / EHEC)</name>
    <dbReference type="NCBI Taxonomy" id="444450"/>
    <lineage>
        <taxon>Bacteria</taxon>
        <taxon>Pseudomonadati</taxon>
        <taxon>Pseudomonadota</taxon>
        <taxon>Gammaproteobacteria</taxon>
        <taxon>Enterobacterales</taxon>
        <taxon>Enterobacteriaceae</taxon>
        <taxon>Escherichia</taxon>
    </lineage>
</organism>
<feature type="chain" id="PRO_1000121430" description="Large ribosomal subunit protein bL12">
    <location>
        <begin position="1"/>
        <end position="121"/>
    </location>
</feature>
<reference key="1">
    <citation type="journal article" date="2011" name="Proc. Natl. Acad. Sci. U.S.A.">
        <title>Genomic anatomy of Escherichia coli O157:H7 outbreaks.</title>
        <authorList>
            <person name="Eppinger M."/>
            <person name="Mammel M.K."/>
            <person name="Leclerc J.E."/>
            <person name="Ravel J."/>
            <person name="Cebula T.A."/>
        </authorList>
    </citation>
    <scope>NUCLEOTIDE SEQUENCE [LARGE SCALE GENOMIC DNA]</scope>
    <source>
        <strain>EC4115 / EHEC</strain>
    </source>
</reference>
<keyword id="KW-0687">Ribonucleoprotein</keyword>
<keyword id="KW-0689">Ribosomal protein</keyword>
<accession>B5Z082</accession>
<proteinExistence type="inferred from homology"/>